<organism>
    <name type="scientific">Escherichia coli O127:H6 (strain E2348/69 / EPEC)</name>
    <dbReference type="NCBI Taxonomy" id="574521"/>
    <lineage>
        <taxon>Bacteria</taxon>
        <taxon>Pseudomonadati</taxon>
        <taxon>Pseudomonadota</taxon>
        <taxon>Gammaproteobacteria</taxon>
        <taxon>Enterobacterales</taxon>
        <taxon>Enterobacteriaceae</taxon>
        <taxon>Escherichia</taxon>
    </lineage>
</organism>
<keyword id="KW-0227">DNA damage</keyword>
<keyword id="KW-0234">DNA repair</keyword>
<keyword id="KW-0235">DNA replication</keyword>
<keyword id="KW-0436">Ligase</keyword>
<keyword id="KW-0520">NAD</keyword>
<keyword id="KW-1185">Reference proteome</keyword>
<gene>
    <name evidence="1" type="primary">ligB</name>
    <name type="ordered locus">E2348C_3911</name>
</gene>
<evidence type="ECO:0000255" key="1">
    <source>
        <dbReference type="HAMAP-Rule" id="MF_01587"/>
    </source>
</evidence>
<feature type="chain" id="PRO_1000185678" description="DNA ligase B">
    <location>
        <begin position="1"/>
        <end position="561"/>
    </location>
</feature>
<feature type="active site" description="N6-AMP-lysine intermediate" evidence="1">
    <location>
        <position position="125"/>
    </location>
</feature>
<comment type="function">
    <text evidence="1">Catalyzes the formation of phosphodiester linkages between 5'-phosphoryl and 3'-hydroxyl groups in double-stranded DNA using NAD as a coenzyme and as the energy source for the reaction.</text>
</comment>
<comment type="catalytic activity">
    <reaction evidence="1">
        <text>NAD(+) + (deoxyribonucleotide)n-3'-hydroxyl + 5'-phospho-(deoxyribonucleotide)m = (deoxyribonucleotide)n+m + AMP + beta-nicotinamide D-nucleotide.</text>
        <dbReference type="EC" id="6.5.1.2"/>
    </reaction>
</comment>
<comment type="similarity">
    <text evidence="1">Belongs to the NAD-dependent DNA ligase family. LigB subfamily.</text>
</comment>
<accession>B7UM69</accession>
<name>LIGB_ECO27</name>
<protein>
    <recommendedName>
        <fullName evidence="1">DNA ligase B</fullName>
        <ecNumber evidence="1">6.5.1.2</ecNumber>
    </recommendedName>
    <alternativeName>
        <fullName evidence="1">Polydeoxyribonucleotide synthase [NAD(+)] B</fullName>
    </alternativeName>
</protein>
<dbReference type="EC" id="6.5.1.2" evidence="1"/>
<dbReference type="EMBL" id="FM180568">
    <property type="protein sequence ID" value="CAS11459.1"/>
    <property type="molecule type" value="Genomic_DNA"/>
</dbReference>
<dbReference type="RefSeq" id="WP_012579016.1">
    <property type="nucleotide sequence ID" value="NC_011601.1"/>
</dbReference>
<dbReference type="SMR" id="B7UM69"/>
<dbReference type="KEGG" id="ecg:E2348C_3911"/>
<dbReference type="HOGENOM" id="CLU_489786_0_0_6"/>
<dbReference type="Proteomes" id="UP000008205">
    <property type="component" value="Chromosome"/>
</dbReference>
<dbReference type="GO" id="GO:0003911">
    <property type="term" value="F:DNA ligase (NAD+) activity"/>
    <property type="evidence" value="ECO:0007669"/>
    <property type="project" value="UniProtKB-UniRule"/>
</dbReference>
<dbReference type="GO" id="GO:0006281">
    <property type="term" value="P:DNA repair"/>
    <property type="evidence" value="ECO:0007669"/>
    <property type="project" value="UniProtKB-KW"/>
</dbReference>
<dbReference type="GO" id="GO:0006260">
    <property type="term" value="P:DNA replication"/>
    <property type="evidence" value="ECO:0007669"/>
    <property type="project" value="UniProtKB-KW"/>
</dbReference>
<dbReference type="FunFam" id="1.10.287.610:FF:000003">
    <property type="entry name" value="DNA ligase B"/>
    <property type="match status" value="1"/>
</dbReference>
<dbReference type="FunFam" id="2.40.50.140:FF:000139">
    <property type="entry name" value="DNA ligase B"/>
    <property type="match status" value="1"/>
</dbReference>
<dbReference type="FunFam" id="3.30.470.30:FF:000007">
    <property type="entry name" value="DNA ligase B"/>
    <property type="match status" value="1"/>
</dbReference>
<dbReference type="Gene3D" id="3.30.470.30">
    <property type="entry name" value="DNA ligase/mRNA capping enzyme"/>
    <property type="match status" value="1"/>
</dbReference>
<dbReference type="Gene3D" id="1.10.287.610">
    <property type="entry name" value="Helix hairpin bin"/>
    <property type="match status" value="1"/>
</dbReference>
<dbReference type="Gene3D" id="2.40.50.140">
    <property type="entry name" value="Nucleic acid-binding proteins"/>
    <property type="match status" value="1"/>
</dbReference>
<dbReference type="HAMAP" id="MF_01587">
    <property type="entry name" value="DNA_ligase_B"/>
    <property type="match status" value="1"/>
</dbReference>
<dbReference type="InterPro" id="IPR018239">
    <property type="entry name" value="DNA_ligase_AS"/>
</dbReference>
<dbReference type="InterPro" id="IPR020923">
    <property type="entry name" value="DNA_ligase_B"/>
</dbReference>
<dbReference type="InterPro" id="IPR033136">
    <property type="entry name" value="DNA_ligase_CS"/>
</dbReference>
<dbReference type="InterPro" id="IPR013839">
    <property type="entry name" value="DNAligase_adenylation"/>
</dbReference>
<dbReference type="InterPro" id="IPR013840">
    <property type="entry name" value="DNAligase_N"/>
</dbReference>
<dbReference type="InterPro" id="IPR012340">
    <property type="entry name" value="NA-bd_OB-fold"/>
</dbReference>
<dbReference type="InterPro" id="IPR050326">
    <property type="entry name" value="NAD_dep_DNA_ligaseB"/>
</dbReference>
<dbReference type="InterPro" id="IPR004150">
    <property type="entry name" value="NAD_DNA_ligase_OB"/>
</dbReference>
<dbReference type="InterPro" id="IPR010994">
    <property type="entry name" value="RuvA_2-like"/>
</dbReference>
<dbReference type="NCBIfam" id="NF005987">
    <property type="entry name" value="PRK08097.1"/>
    <property type="match status" value="1"/>
</dbReference>
<dbReference type="PANTHER" id="PTHR47810">
    <property type="entry name" value="DNA LIGASE"/>
    <property type="match status" value="1"/>
</dbReference>
<dbReference type="PANTHER" id="PTHR47810:SF1">
    <property type="entry name" value="DNA LIGASE B"/>
    <property type="match status" value="1"/>
</dbReference>
<dbReference type="Pfam" id="PF01653">
    <property type="entry name" value="DNA_ligase_aden"/>
    <property type="match status" value="1"/>
</dbReference>
<dbReference type="Pfam" id="PF03120">
    <property type="entry name" value="DNA_ligase_OB"/>
    <property type="match status" value="1"/>
</dbReference>
<dbReference type="SMART" id="SM00532">
    <property type="entry name" value="LIGANc"/>
    <property type="match status" value="1"/>
</dbReference>
<dbReference type="SUPFAM" id="SSF56091">
    <property type="entry name" value="DNA ligase/mRNA capping enzyme, catalytic domain"/>
    <property type="match status" value="1"/>
</dbReference>
<dbReference type="SUPFAM" id="SSF50249">
    <property type="entry name" value="Nucleic acid-binding proteins"/>
    <property type="match status" value="1"/>
</dbReference>
<dbReference type="SUPFAM" id="SSF47781">
    <property type="entry name" value="RuvA domain 2-like"/>
    <property type="match status" value="1"/>
</dbReference>
<dbReference type="PROSITE" id="PS01055">
    <property type="entry name" value="DNA_LIGASE_N1"/>
    <property type="match status" value="1"/>
</dbReference>
<dbReference type="PROSITE" id="PS01056">
    <property type="entry name" value="DNA_LIGASE_N2"/>
    <property type="match status" value="1"/>
</dbReference>
<reference key="1">
    <citation type="journal article" date="2009" name="J. Bacteriol.">
        <title>Complete genome sequence and comparative genome analysis of enteropathogenic Escherichia coli O127:H6 strain E2348/69.</title>
        <authorList>
            <person name="Iguchi A."/>
            <person name="Thomson N.R."/>
            <person name="Ogura Y."/>
            <person name="Saunders D."/>
            <person name="Ooka T."/>
            <person name="Henderson I.R."/>
            <person name="Harris D."/>
            <person name="Asadulghani M."/>
            <person name="Kurokawa K."/>
            <person name="Dean P."/>
            <person name="Kenny B."/>
            <person name="Quail M.A."/>
            <person name="Thurston S."/>
            <person name="Dougan G."/>
            <person name="Hayashi T."/>
            <person name="Parkhill J."/>
            <person name="Frankel G."/>
        </authorList>
    </citation>
    <scope>NUCLEOTIDE SEQUENCE [LARGE SCALE GENOMIC DNA]</scope>
    <source>
        <strain>E2348/69 / EPEC</strain>
    </source>
</reference>
<proteinExistence type="inferred from homology"/>
<sequence>MKVWMAILISILCWQSSSWAVCPAWSPARAQEEISRLQQQIKQWDDDYWKEGKSEVEDGVYDQLSARLTQWQRCFGEETHRDAMMPPLNGAVIHPVAHTGVRKMADKIALSLWMRERSDLWVQPKVDGVAVTLVYRDGKLNKAISRGNGLKGEDWTQKVRLISAVPQTVSGPLANSTLQGEIFLKREGHIQQQMGGINARAKVADLMMRQDDSDTLNSLGVFVWAWPDGPQLMTDRLKELATAGFTLTQTYTRAVKNADEVARVRNAWWKTKLPFVTDGVVVRAAKEPESRHWLPGQAEWLVAWKYQPVAQVAEVKAIQFAVGKSGKISVVASLAPVMLDDKKVQRVNIGSVRRWQEWNIAPGDQILVSLAGQGIPRIDDVVWRGAERTKPTPPENRFNSLTCYFASDVCQEQFISRLVWLGSKQVLGLDGIGEAGWRSLHQTHRFEHIFSWLLLTPEQLQNTPGIAKSKSAQLWHQFNLARQQPFTRWVMAMGIPLTRAALNASDERSWSQLLLSTEQFWQQLPGTGSGRVRQVIEWKENAQIKKLGSWLAAQQITGFEP</sequence>